<gene>
    <name type="primary">FOXP2</name>
</gene>
<reference key="1">
    <citation type="journal article" date="2002" name="Nature">
        <title>Molecular evolution of FOXP2, a gene involved in speech and language.</title>
        <authorList>
            <person name="Enard W."/>
            <person name="Przeworski M."/>
            <person name="Fisher S.E."/>
            <person name="Lai C.S.L."/>
            <person name="Wiebe V."/>
            <person name="Kitano T."/>
            <person name="Monaco A.P."/>
            <person name="Paeaebo S."/>
        </authorList>
    </citation>
    <scope>NUCLEOTIDE SEQUENCE [MRNA]</scope>
</reference>
<reference key="2">
    <citation type="journal article" date="2002" name="Genetics">
        <title>Accelerated protein evolution and origins of human-specific features: Foxp2 as an example.</title>
        <authorList>
            <person name="Zhang J."/>
            <person name="Webb D.M."/>
            <person name="Podlaha O."/>
        </authorList>
    </citation>
    <scope>NUCLEOTIDE SEQUENCE [MRNA]</scope>
</reference>
<reference key="3">
    <citation type="submission" date="2001-11" db="EMBL/GenBank/DDBJ databases">
        <title>The FOXP2 gene, implicated in language development, is conserved in mammalian evolution.</title>
        <authorList>
            <person name="Walter N.A.R."/>
            <person name="Thompson J."/>
            <person name="McGoldrick D.J."/>
            <person name="Messier W."/>
        </authorList>
    </citation>
    <scope>NUCLEOTIDE SEQUENCE [GENOMIC DNA]</scope>
    <source>
        <tissue>Blood</tissue>
    </source>
</reference>
<sequence length="713" mass="79677">MMQESATETISNSSMNQNGMSTLSSQLDAGSRDGRSSGDTSSEVSTVELLHLQQQQALQAARQLLLQQQTSGLKSPKSSDKQRPLQVPVSVAMMTPQVITPQQMQQILQQQVLSPQQLQALLQQQQAVMLQQQQLQEFYKKQQEQLHLQLLQQQQQQQQQQQQQQQQQQQQQQQQQQQQQQQQQQQQQQHPGKQAKEQQQQQQQQQQLAAQQLVFQQQLLQMQQLQQQQHLLSLQRQGLISIPPGQAALPVQSLPQAGLSPAEIQQLWKEVTGVHSMEDNGIKHGGLDLTTNNSSSTTSSTTSKASPPITHHSIVNGQSSVLNARRDSSSHEETGASHTLYGHGVCKWPGCESICEDFGQFLKHLNNEHALDDRSTAQCRVQMQVVQQLEIQLSKERERLQAMMTHLHMRPSEPKPSPKPLNLVSSVTMSKNMLETSPQSLPQTPTTPTAPVTPITQGPSVITPASVPNVGAIRRRHSDKYNIPMSSEIAPNYEFYKNADVRPPFTYATLIRQAIMESSDRQLTLNEIYSWFTRTFAYFRRNAATWKNAVRHNLSLHKCFVRVENVKGAVWTVDEVEYQKRRSQKITGSPTLVKNIPTSLGYGAALNASLQAALAESSLPLLSNPGLINNASSGLLQAVHEDLNGSLDHIDSNGNSSPGCSPQPHIHSIHVKEEPVIAEDEDCPMSLVTTANHSPELEDDREIEEEPLSEDLE</sequence>
<keyword id="KW-0238">DNA-binding</keyword>
<keyword id="KW-0479">Metal-binding</keyword>
<keyword id="KW-0539">Nucleus</keyword>
<keyword id="KW-1185">Reference proteome</keyword>
<keyword id="KW-0678">Repressor</keyword>
<keyword id="KW-0804">Transcription</keyword>
<keyword id="KW-0805">Transcription regulation</keyword>
<keyword id="KW-0862">Zinc</keyword>
<keyword id="KW-0863">Zinc-finger</keyword>
<name>FOXP2_GORGO</name>
<protein>
    <recommendedName>
        <fullName>Forkhead box protein P2</fullName>
    </recommendedName>
</protein>
<accession>Q8MJ99</accession>
<accession>Q5QL02</accession>
<feature type="chain" id="PRO_0000091878" description="Forkhead box protein P2">
    <location>
        <begin position="1"/>
        <end position="713"/>
    </location>
</feature>
<feature type="zinc finger region" description="C2H2-type">
    <location>
        <begin position="344"/>
        <end position="369"/>
    </location>
</feature>
<feature type="DNA-binding region" description="Fork-head" evidence="4">
    <location>
        <begin position="502"/>
        <end position="592"/>
    </location>
</feature>
<feature type="region of interest" description="Disordered" evidence="5">
    <location>
        <begin position="1"/>
        <end position="44"/>
    </location>
</feature>
<feature type="region of interest" description="Disordered" evidence="5">
    <location>
        <begin position="283"/>
        <end position="337"/>
    </location>
</feature>
<feature type="region of interest" description="Leucine-zipper">
    <location>
        <begin position="386"/>
        <end position="407"/>
    </location>
</feature>
<feature type="region of interest" description="CTBP1-binding" evidence="1">
    <location>
        <begin position="420"/>
        <end position="424"/>
    </location>
</feature>
<feature type="region of interest" description="Disordered" evidence="5">
    <location>
        <begin position="436"/>
        <end position="463"/>
    </location>
</feature>
<feature type="region of interest" description="Disordered" evidence="5">
    <location>
        <begin position="647"/>
        <end position="666"/>
    </location>
</feature>
<feature type="region of interest" description="Disordered" evidence="5">
    <location>
        <begin position="676"/>
        <end position="713"/>
    </location>
</feature>
<feature type="compositionally biased region" description="Polar residues" evidence="5">
    <location>
        <begin position="1"/>
        <end position="28"/>
    </location>
</feature>
<feature type="compositionally biased region" description="Low complexity" evidence="5">
    <location>
        <begin position="290"/>
        <end position="303"/>
    </location>
</feature>
<feature type="compositionally biased region" description="Polar residues" evidence="5">
    <location>
        <begin position="313"/>
        <end position="322"/>
    </location>
</feature>
<feature type="compositionally biased region" description="Basic and acidic residues" evidence="5">
    <location>
        <begin position="324"/>
        <end position="335"/>
    </location>
</feature>
<feature type="compositionally biased region" description="Low complexity" evidence="5">
    <location>
        <begin position="436"/>
        <end position="457"/>
    </location>
</feature>
<feature type="compositionally biased region" description="Acidic residues" evidence="5">
    <location>
        <begin position="697"/>
        <end position="713"/>
    </location>
</feature>
<comment type="function">
    <text evidence="1">Transcriptional repressor that may play a role in the specification and differentiation of lung epithelium. May also play a role in developing neural, gastrointestinal and cardiovascular tissues. Can act with CTBP1 to synergistically repress transcription but CTPBP1 is not essential. Plays a role in synapse formation by regulating SRPX2 levels (By similarity).</text>
</comment>
<comment type="subunit">
    <text evidence="2 3">Forms homodimers and heterodimers with FOXP1 and FOXP4. Dimerization is required for DNA-binding. Interacts with CTBP1 (By similarity). Interacts with FOXP1 (By similarity). Interacts with TBR1 (By similarity). Interacts with ZMYM2 (By similarity).</text>
</comment>
<comment type="subcellular location">
    <subcellularLocation>
        <location evidence="6">Nucleus</location>
    </subcellularLocation>
</comment>
<comment type="domain">
    <text evidence="1">The leucine-zipper is required for dimerization and transcriptional repression.</text>
</comment>
<evidence type="ECO:0000250" key="1"/>
<evidence type="ECO:0000250" key="2">
    <source>
        <dbReference type="UniProtKB" id="O15409"/>
    </source>
</evidence>
<evidence type="ECO:0000250" key="3">
    <source>
        <dbReference type="UniProtKB" id="P58463"/>
    </source>
</evidence>
<evidence type="ECO:0000255" key="4">
    <source>
        <dbReference type="PROSITE-ProRule" id="PRU00089"/>
    </source>
</evidence>
<evidence type="ECO:0000256" key="5">
    <source>
        <dbReference type="SAM" id="MobiDB-lite"/>
    </source>
</evidence>
<evidence type="ECO:0000305" key="6"/>
<proteinExistence type="evidence at transcript level"/>
<organism>
    <name type="scientific">Gorilla gorilla gorilla</name>
    <name type="common">Western lowland gorilla</name>
    <dbReference type="NCBI Taxonomy" id="9595"/>
    <lineage>
        <taxon>Eukaryota</taxon>
        <taxon>Metazoa</taxon>
        <taxon>Chordata</taxon>
        <taxon>Craniata</taxon>
        <taxon>Vertebrata</taxon>
        <taxon>Euteleostomi</taxon>
        <taxon>Mammalia</taxon>
        <taxon>Eutheria</taxon>
        <taxon>Euarchontoglires</taxon>
        <taxon>Primates</taxon>
        <taxon>Haplorrhini</taxon>
        <taxon>Catarrhini</taxon>
        <taxon>Hominidae</taxon>
        <taxon>Gorilla</taxon>
    </lineage>
</organism>
<dbReference type="EMBL" id="AF512948">
    <property type="protein sequence ID" value="AAN03386.1"/>
    <property type="molecule type" value="mRNA"/>
</dbReference>
<dbReference type="EMBL" id="AY143180">
    <property type="protein sequence ID" value="AAN60058.1"/>
    <property type="molecule type" value="mRNA"/>
</dbReference>
<dbReference type="EMBL" id="AY064597">
    <property type="protein sequence ID" value="AAL57733.1"/>
    <property type="molecule type" value="Genomic_DNA"/>
</dbReference>
<dbReference type="EMBL" id="AY064583">
    <property type="protein sequence ID" value="AAL57733.1"/>
    <property type="status" value="JOINED"/>
    <property type="molecule type" value="Genomic_DNA"/>
</dbReference>
<dbReference type="EMBL" id="AY064584">
    <property type="protein sequence ID" value="AAL57733.1"/>
    <property type="status" value="JOINED"/>
    <property type="molecule type" value="Genomic_DNA"/>
</dbReference>
<dbReference type="EMBL" id="AY064586">
    <property type="protein sequence ID" value="AAL57733.1"/>
    <property type="status" value="JOINED"/>
    <property type="molecule type" value="Genomic_DNA"/>
</dbReference>
<dbReference type="EMBL" id="AY064585">
    <property type="protein sequence ID" value="AAL57733.1"/>
    <property type="status" value="JOINED"/>
    <property type="molecule type" value="Genomic_DNA"/>
</dbReference>
<dbReference type="EMBL" id="AY064588">
    <property type="protein sequence ID" value="AAL57733.1"/>
    <property type="status" value="JOINED"/>
    <property type="molecule type" value="Genomic_DNA"/>
</dbReference>
<dbReference type="EMBL" id="AY064590">
    <property type="protein sequence ID" value="AAL57733.1"/>
    <property type="status" value="JOINED"/>
    <property type="molecule type" value="Genomic_DNA"/>
</dbReference>
<dbReference type="EMBL" id="AY064592">
    <property type="protein sequence ID" value="AAL57733.1"/>
    <property type="status" value="JOINED"/>
    <property type="molecule type" value="Genomic_DNA"/>
</dbReference>
<dbReference type="EMBL" id="AY064594">
    <property type="protein sequence ID" value="AAL57733.1"/>
    <property type="status" value="JOINED"/>
    <property type="molecule type" value="Genomic_DNA"/>
</dbReference>
<dbReference type="EMBL" id="AY064596">
    <property type="protein sequence ID" value="AAL57733.1"/>
    <property type="status" value="JOINED"/>
    <property type="molecule type" value="Genomic_DNA"/>
</dbReference>
<dbReference type="EMBL" id="AY064595">
    <property type="protein sequence ID" value="AAL57733.1"/>
    <property type="status" value="JOINED"/>
    <property type="molecule type" value="Genomic_DNA"/>
</dbReference>
<dbReference type="EMBL" id="AY064593">
    <property type="protein sequence ID" value="AAL57733.1"/>
    <property type="status" value="JOINED"/>
    <property type="molecule type" value="Genomic_DNA"/>
</dbReference>
<dbReference type="EMBL" id="AY064591">
    <property type="protein sequence ID" value="AAL57733.1"/>
    <property type="status" value="JOINED"/>
    <property type="molecule type" value="Genomic_DNA"/>
</dbReference>
<dbReference type="EMBL" id="AY064589">
    <property type="protein sequence ID" value="AAL57733.1"/>
    <property type="status" value="JOINED"/>
    <property type="molecule type" value="Genomic_DNA"/>
</dbReference>
<dbReference type="EMBL" id="AY064587">
    <property type="protein sequence ID" value="AAL57733.1"/>
    <property type="status" value="JOINED"/>
    <property type="molecule type" value="Genomic_DNA"/>
</dbReference>
<dbReference type="RefSeq" id="NP_001266466.1">
    <property type="nucleotide sequence ID" value="NM_001279537.1"/>
</dbReference>
<dbReference type="RefSeq" id="XP_030868488.1">
    <property type="nucleotide sequence ID" value="XM_031012628.3"/>
</dbReference>
<dbReference type="RefSeq" id="XP_055248121.1">
    <property type="nucleotide sequence ID" value="XM_055392146.2"/>
</dbReference>
<dbReference type="RefSeq" id="XP_063564108.1">
    <property type="nucleotide sequence ID" value="XM_063708038.1"/>
</dbReference>
<dbReference type="RefSeq" id="XP_063564109.1">
    <property type="nucleotide sequence ID" value="XM_063708039.1"/>
</dbReference>
<dbReference type="RefSeq" id="XP_063564110.1">
    <property type="nucleotide sequence ID" value="XM_063708040.1"/>
</dbReference>
<dbReference type="RefSeq" id="XP_063564111.1">
    <property type="nucleotide sequence ID" value="XM_063708041.1"/>
</dbReference>
<dbReference type="SMR" id="Q8MJ99"/>
<dbReference type="FunCoup" id="Q8MJ99">
    <property type="interactions" value="1401"/>
</dbReference>
<dbReference type="STRING" id="9593.ENSGGOP00000047838"/>
<dbReference type="GeneID" id="101150977"/>
<dbReference type="CTD" id="93986"/>
<dbReference type="InParanoid" id="Q8MJ99"/>
<dbReference type="Proteomes" id="UP000001519">
    <property type="component" value="Unplaced"/>
</dbReference>
<dbReference type="GO" id="GO:0005634">
    <property type="term" value="C:nucleus"/>
    <property type="evidence" value="ECO:0000318"/>
    <property type="project" value="GO_Central"/>
</dbReference>
<dbReference type="GO" id="GO:0003677">
    <property type="term" value="F:DNA binding"/>
    <property type="evidence" value="ECO:0000250"/>
    <property type="project" value="UniProtKB"/>
</dbReference>
<dbReference type="GO" id="GO:0001227">
    <property type="term" value="F:DNA-binding transcription repressor activity, RNA polymerase II-specific"/>
    <property type="evidence" value="ECO:0000318"/>
    <property type="project" value="GO_Central"/>
</dbReference>
<dbReference type="GO" id="GO:0042803">
    <property type="term" value="F:protein homodimerization activity"/>
    <property type="evidence" value="ECO:0000250"/>
    <property type="project" value="UniProtKB"/>
</dbReference>
<dbReference type="GO" id="GO:0000978">
    <property type="term" value="F:RNA polymerase II cis-regulatory region sequence-specific DNA binding"/>
    <property type="evidence" value="ECO:0000318"/>
    <property type="project" value="GO_Central"/>
</dbReference>
<dbReference type="GO" id="GO:0008270">
    <property type="term" value="F:zinc ion binding"/>
    <property type="evidence" value="ECO:0007669"/>
    <property type="project" value="UniProtKB-KW"/>
</dbReference>
<dbReference type="GO" id="GO:0021757">
    <property type="term" value="P:caudate nucleus development"/>
    <property type="evidence" value="ECO:0000250"/>
    <property type="project" value="UniProtKB"/>
</dbReference>
<dbReference type="GO" id="GO:0021758">
    <property type="term" value="P:putamen development"/>
    <property type="evidence" value="ECO:0000250"/>
    <property type="project" value="UniProtKB"/>
</dbReference>
<dbReference type="GO" id="GO:0006357">
    <property type="term" value="P:regulation of transcription by RNA polymerase II"/>
    <property type="evidence" value="ECO:0000318"/>
    <property type="project" value="GO_Central"/>
</dbReference>
<dbReference type="CDD" id="cd20065">
    <property type="entry name" value="FH_FOXP2"/>
    <property type="match status" value="1"/>
</dbReference>
<dbReference type="FunFam" id="1.20.5.340:FF:000005">
    <property type="entry name" value="Forkhead box P1, isoform CRA_f"/>
    <property type="match status" value="1"/>
</dbReference>
<dbReference type="FunFam" id="1.10.10.10:FF:000010">
    <property type="entry name" value="Forkhead box P2 isoform B"/>
    <property type="match status" value="1"/>
</dbReference>
<dbReference type="Gene3D" id="1.20.5.340">
    <property type="match status" value="1"/>
</dbReference>
<dbReference type="Gene3D" id="1.10.10.10">
    <property type="entry name" value="Winged helix-like DNA-binding domain superfamily/Winged helix DNA-binding domain"/>
    <property type="match status" value="1"/>
</dbReference>
<dbReference type="InterPro" id="IPR047412">
    <property type="entry name" value="FH_FOXP1_P2"/>
</dbReference>
<dbReference type="InterPro" id="IPR001766">
    <property type="entry name" value="Fork_head_dom"/>
</dbReference>
<dbReference type="InterPro" id="IPR050998">
    <property type="entry name" value="FOXP"/>
</dbReference>
<dbReference type="InterPro" id="IPR032354">
    <property type="entry name" value="FOXP-CC"/>
</dbReference>
<dbReference type="InterPro" id="IPR030456">
    <property type="entry name" value="TF_fork_head_CS_2"/>
</dbReference>
<dbReference type="InterPro" id="IPR036388">
    <property type="entry name" value="WH-like_DNA-bd_sf"/>
</dbReference>
<dbReference type="InterPro" id="IPR036390">
    <property type="entry name" value="WH_DNA-bd_sf"/>
</dbReference>
<dbReference type="PANTHER" id="PTHR45796">
    <property type="entry name" value="FORKHEAD BOX P, ISOFORM C"/>
    <property type="match status" value="1"/>
</dbReference>
<dbReference type="PANTHER" id="PTHR45796:SF9">
    <property type="entry name" value="FORKHEAD BOX PROTEIN P2"/>
    <property type="match status" value="1"/>
</dbReference>
<dbReference type="Pfam" id="PF00250">
    <property type="entry name" value="Forkhead"/>
    <property type="match status" value="1"/>
</dbReference>
<dbReference type="Pfam" id="PF16159">
    <property type="entry name" value="FOXP-CC"/>
    <property type="match status" value="1"/>
</dbReference>
<dbReference type="PRINTS" id="PR00053">
    <property type="entry name" value="FORKHEAD"/>
</dbReference>
<dbReference type="SMART" id="SM00339">
    <property type="entry name" value="FH"/>
    <property type="match status" value="1"/>
</dbReference>
<dbReference type="SUPFAM" id="SSF46785">
    <property type="entry name" value="Winged helix' DNA-binding domain"/>
    <property type="match status" value="1"/>
</dbReference>
<dbReference type="PROSITE" id="PS00658">
    <property type="entry name" value="FORK_HEAD_2"/>
    <property type="match status" value="1"/>
</dbReference>
<dbReference type="PROSITE" id="PS50039">
    <property type="entry name" value="FORK_HEAD_3"/>
    <property type="match status" value="1"/>
</dbReference>
<dbReference type="PROSITE" id="PS00028">
    <property type="entry name" value="ZINC_FINGER_C2H2_1"/>
    <property type="match status" value="1"/>
</dbReference>